<accession>P53612</accession>
<accession>A2RTE6</accession>
<dbReference type="EC" id="2.5.1.60" evidence="4"/>
<dbReference type="EMBL" id="U12922">
    <property type="protein sequence ID" value="AAB01502.1"/>
    <property type="molecule type" value="mRNA"/>
</dbReference>
<dbReference type="EMBL" id="CH466532">
    <property type="protein sequence ID" value="EDL11902.1"/>
    <property type="molecule type" value="Genomic_DNA"/>
</dbReference>
<dbReference type="EMBL" id="BC132473">
    <property type="protein sequence ID" value="AAI32474.1"/>
    <property type="molecule type" value="mRNA"/>
</dbReference>
<dbReference type="EMBL" id="BC138547">
    <property type="protein sequence ID" value="AAI38548.1"/>
    <property type="molecule type" value="mRNA"/>
</dbReference>
<dbReference type="CCDS" id="CCDS17923.1"/>
<dbReference type="PIR" id="I49116">
    <property type="entry name" value="I49116"/>
</dbReference>
<dbReference type="PIR" id="JC6177">
    <property type="entry name" value="JC6177"/>
</dbReference>
<dbReference type="RefSeq" id="NP_035361.2">
    <property type="nucleotide sequence ID" value="NM_011231.2"/>
</dbReference>
<dbReference type="PDB" id="3PZ1">
    <property type="method" value="X-ray"/>
    <property type="resolution" value="1.95 A"/>
    <property type="chains" value="B=10-339"/>
</dbReference>
<dbReference type="PDB" id="3PZ2">
    <property type="method" value="X-ray"/>
    <property type="resolution" value="2.35 A"/>
    <property type="chains" value="B=10-339"/>
</dbReference>
<dbReference type="PDB" id="3PZ3">
    <property type="method" value="X-ray"/>
    <property type="resolution" value="2.00 A"/>
    <property type="chains" value="B=10-339"/>
</dbReference>
<dbReference type="PDBsum" id="3PZ1"/>
<dbReference type="PDBsum" id="3PZ2"/>
<dbReference type="PDBsum" id="3PZ3"/>
<dbReference type="SMR" id="P53612"/>
<dbReference type="BioGRID" id="202555">
    <property type="interactions" value="9"/>
</dbReference>
<dbReference type="ComplexPortal" id="CPX-2920">
    <property type="entry name" value="Protein geranylgeranyltransferase type II complex"/>
</dbReference>
<dbReference type="FunCoup" id="P53612">
    <property type="interactions" value="653"/>
</dbReference>
<dbReference type="IntAct" id="P53612">
    <property type="interactions" value="1"/>
</dbReference>
<dbReference type="STRING" id="10090.ENSMUSP00000129481"/>
<dbReference type="iPTMnet" id="P53612"/>
<dbReference type="PhosphoSitePlus" id="P53612"/>
<dbReference type="SwissPalm" id="P53612"/>
<dbReference type="PaxDb" id="10090-ENSMUSP00000129481"/>
<dbReference type="PeptideAtlas" id="P53612"/>
<dbReference type="ProteomicsDB" id="288135"/>
<dbReference type="Pumba" id="P53612"/>
<dbReference type="Antibodypedia" id="19716">
    <property type="antibodies" value="72 antibodies from 23 providers"/>
</dbReference>
<dbReference type="DNASU" id="19352"/>
<dbReference type="Ensembl" id="ENSMUST00000167111.6">
    <property type="protein sequence ID" value="ENSMUSP00000129481.2"/>
    <property type="gene ID" value="ENSMUSG00000038975.15"/>
</dbReference>
<dbReference type="GeneID" id="19352"/>
<dbReference type="KEGG" id="mmu:19352"/>
<dbReference type="UCSC" id="uc008rug.2">
    <property type="organism name" value="mouse"/>
</dbReference>
<dbReference type="AGR" id="MGI:99537"/>
<dbReference type="CTD" id="5876"/>
<dbReference type="MGI" id="MGI:99537">
    <property type="gene designation" value="Rabggtb"/>
</dbReference>
<dbReference type="VEuPathDB" id="HostDB:ENSMUSG00000038975"/>
<dbReference type="eggNOG" id="KOG0366">
    <property type="taxonomic scope" value="Eukaryota"/>
</dbReference>
<dbReference type="GeneTree" id="ENSGT00950000183128"/>
<dbReference type="InParanoid" id="P53612"/>
<dbReference type="OrthoDB" id="5428259at2759"/>
<dbReference type="PhylomeDB" id="P53612"/>
<dbReference type="TreeFam" id="TF105762"/>
<dbReference type="Reactome" id="R-MMU-6803205">
    <property type="pathway name" value="TP53 regulates transcription of several additional cell death genes whose specific roles in p53-dependent apoptosis remain uncertain"/>
</dbReference>
<dbReference type="Reactome" id="R-MMU-8873719">
    <property type="pathway name" value="RAB geranylgeranylation"/>
</dbReference>
<dbReference type="BioGRID-ORCS" id="19352">
    <property type="hits" value="25 hits in 73 CRISPR screens"/>
</dbReference>
<dbReference type="ChiTaRS" id="Rabggtb">
    <property type="organism name" value="mouse"/>
</dbReference>
<dbReference type="PRO" id="PR:P53612"/>
<dbReference type="Proteomes" id="UP000000589">
    <property type="component" value="Chromosome 3"/>
</dbReference>
<dbReference type="RNAct" id="P53612">
    <property type="molecule type" value="protein"/>
</dbReference>
<dbReference type="Bgee" id="ENSMUSG00000038975">
    <property type="expression patterns" value="Expressed in ectoplacental cone and 263 other cell types or tissues"/>
</dbReference>
<dbReference type="ExpressionAtlas" id="P53612">
    <property type="expression patterns" value="baseline and differential"/>
</dbReference>
<dbReference type="GO" id="GO:0005968">
    <property type="term" value="C:Rab-protein geranylgeranyltransferase complex"/>
    <property type="evidence" value="ECO:0000250"/>
    <property type="project" value="UniProtKB"/>
</dbReference>
<dbReference type="GO" id="GO:0004663">
    <property type="term" value="F:Rab geranylgeranyltransferase activity"/>
    <property type="evidence" value="ECO:0000250"/>
    <property type="project" value="UniProtKB"/>
</dbReference>
<dbReference type="GO" id="GO:0031267">
    <property type="term" value="F:small GTPase binding"/>
    <property type="evidence" value="ECO:0000250"/>
    <property type="project" value="UniProtKB"/>
</dbReference>
<dbReference type="GO" id="GO:0008270">
    <property type="term" value="F:zinc ion binding"/>
    <property type="evidence" value="ECO:0000250"/>
    <property type="project" value="UniProtKB"/>
</dbReference>
<dbReference type="GO" id="GO:0018344">
    <property type="term" value="P:protein geranylgeranylation"/>
    <property type="evidence" value="ECO:0000250"/>
    <property type="project" value="UniProtKB"/>
</dbReference>
<dbReference type="CDD" id="cd02894">
    <property type="entry name" value="GGTase-II"/>
    <property type="match status" value="1"/>
</dbReference>
<dbReference type="FunFam" id="1.50.10.20:FF:000004">
    <property type="entry name" value="Geranylgeranyl transferase type-2 subunit beta"/>
    <property type="match status" value="1"/>
</dbReference>
<dbReference type="Gene3D" id="1.50.10.20">
    <property type="match status" value="1"/>
</dbReference>
<dbReference type="InterPro" id="IPR045089">
    <property type="entry name" value="PGGT1B-like"/>
</dbReference>
<dbReference type="InterPro" id="IPR001330">
    <property type="entry name" value="Prenyltrans"/>
</dbReference>
<dbReference type="InterPro" id="IPR026873">
    <property type="entry name" value="Ptb1"/>
</dbReference>
<dbReference type="InterPro" id="IPR008930">
    <property type="entry name" value="Terpenoid_cyclase/PrenylTrfase"/>
</dbReference>
<dbReference type="PANTHER" id="PTHR11774">
    <property type="entry name" value="GERANYLGERANYL TRANSFERASE TYPE BETA SUBUNIT"/>
    <property type="match status" value="1"/>
</dbReference>
<dbReference type="PANTHER" id="PTHR11774:SF11">
    <property type="entry name" value="GERANYLGERANYL TRANSFERASE TYPE-2 SUBUNIT BETA"/>
    <property type="match status" value="1"/>
</dbReference>
<dbReference type="Pfam" id="PF00432">
    <property type="entry name" value="Prenyltrans"/>
    <property type="match status" value="1"/>
</dbReference>
<dbReference type="SUPFAM" id="SSF48239">
    <property type="entry name" value="Terpenoid cyclases/Protein prenyltransferases"/>
    <property type="match status" value="1"/>
</dbReference>
<evidence type="ECO:0000250" key="1">
    <source>
        <dbReference type="UniProtKB" id="P53611"/>
    </source>
</evidence>
<evidence type="ECO:0000250" key="2">
    <source>
        <dbReference type="UniProtKB" id="Q08603"/>
    </source>
</evidence>
<evidence type="ECO:0000269" key="3">
    <source>
    </source>
</evidence>
<evidence type="ECO:0000269" key="4">
    <source>
    </source>
</evidence>
<evidence type="ECO:0000269" key="5">
    <source>
    </source>
</evidence>
<evidence type="ECO:0000305" key="6"/>
<feature type="chain" id="PRO_0000119773" description="Geranylgeranyl transferase type-2 subunit beta">
    <location>
        <begin position="1"/>
        <end position="339"/>
    </location>
</feature>
<feature type="repeat" description="PFTB 1">
    <location>
        <begin position="28"/>
        <end position="69"/>
    </location>
</feature>
<feature type="repeat" description="PFTB 2">
    <location>
        <begin position="76"/>
        <end position="117"/>
    </location>
</feature>
<feature type="repeat" description="PFTB 3">
    <location>
        <begin position="124"/>
        <end position="165"/>
    </location>
</feature>
<feature type="repeat" description="PFTB 4">
    <location>
        <begin position="172"/>
        <end position="213"/>
    </location>
</feature>
<feature type="repeat" description="PFTB 5">
    <location>
        <begin position="220"/>
        <end position="261"/>
    </location>
</feature>
<feature type="repeat" description="PFTB 6">
    <location>
        <begin position="268"/>
        <end position="310"/>
    </location>
</feature>
<feature type="binding site" evidence="2">
    <location>
        <begin position="198"/>
        <end position="200"/>
    </location>
    <ligand>
        <name>geranylgeranyl diphosphate</name>
        <dbReference type="ChEBI" id="CHEBI:57533"/>
    </ligand>
</feature>
<feature type="binding site" evidence="4">
    <location>
        <begin position="240"/>
        <end position="243"/>
    </location>
    <ligand>
        <name>geranylgeranyl diphosphate</name>
        <dbReference type="ChEBI" id="CHEBI:57533"/>
    </ligand>
</feature>
<feature type="binding site" evidence="4">
    <location>
        <position position="246"/>
    </location>
    <ligand>
        <name>Zn(2+)</name>
        <dbReference type="ChEBI" id="CHEBI:29105"/>
        <note>catalytic</note>
    </ligand>
</feature>
<feature type="binding site" evidence="4">
    <location>
        <position position="248"/>
    </location>
    <ligand>
        <name>Zn(2+)</name>
        <dbReference type="ChEBI" id="CHEBI:29105"/>
        <note>catalytic</note>
    </ligand>
</feature>
<feature type="binding site" evidence="2">
    <location>
        <begin position="249"/>
        <end position="252"/>
    </location>
    <ligand>
        <name>geranylgeranyl diphosphate</name>
        <dbReference type="ChEBI" id="CHEBI:57533"/>
    </ligand>
</feature>
<feature type="binding site" evidence="4">
    <location>
        <position position="249"/>
    </location>
    <ligand>
        <name>geranylgeranyl diphosphate</name>
        <dbReference type="ChEBI" id="CHEBI:57533"/>
    </ligand>
</feature>
<feature type="binding site" evidence="4">
    <location>
        <position position="298"/>
    </location>
    <ligand>
        <name>Zn(2+)</name>
        <dbReference type="ChEBI" id="CHEBI:29105"/>
        <note>catalytic</note>
    </ligand>
</feature>
<feature type="modified residue" description="Phosphothreonine" evidence="1">
    <location>
        <position position="11"/>
    </location>
</feature>
<feature type="sequence conflict" description="In Ref. 1; AAB01502." evidence="6" ref="1">
    <original>R</original>
    <variation>A</variation>
    <location>
        <position position="230"/>
    </location>
</feature>
<feature type="sequence conflict" description="In Ref. 1; AAB01502." evidence="6" ref="1">
    <original>G</original>
    <variation>A</variation>
    <location>
        <position position="236"/>
    </location>
</feature>
<feature type="sequence conflict" description="In Ref. 1; AAB01502." evidence="6" ref="1">
    <original>P</original>
    <variation>R</variation>
    <location>
        <position position="241"/>
    </location>
</feature>
<feature type="sequence conflict" description="In Ref. 1; AAB01502." evidence="6" ref="1">
    <original>DR</original>
    <variation>VS</variation>
    <location>
        <begin position="267"/>
        <end position="268"/>
    </location>
</feature>
<name>PGTB2_MOUSE</name>
<sequence length="339" mass="37803">MGSLLFSWKGTQQKDVTIKSDAPDTLLLEKHADYIASYGSKKDDYEYCMSEYLRMSGVYWGLTVMDLMGQLHRMNREEILVFIKSCQHECGGISASIGHDPHLLYTLSAVQILTLYDSVHVINVDKVVAYVQSLQKEDGSFAGDIWGEIDTRFSFCAVATLALLGKLDAINVEKAIEFVLSCMNFDGGFGCRPGSESHAGQIYCCTGFLAITSQLHQVNSDLLGWWLCERQLPSGGLNGRPEKLPDVCYSWWVLASLKIIGRLHWIDREKLRSFILACQDEETGGFADRPGDMVDPFHTLFGIAGLSLLGEEQIKPVSPVFCMPEEVLQRVNVQPELVS</sequence>
<proteinExistence type="evidence at protein level"/>
<reference key="1">
    <citation type="journal article" date="1995" name="Cell Growth Differ.">
        <title>Studies of cloning, chromosomal mapping, and embryonic expression of the mouse Rab geranylgeranyl transferase beta subunit.</title>
        <authorList>
            <person name="Wei L.-N."/>
            <person name="Lee C.-H."/>
            <person name="Chinpaisal C."/>
            <person name="Copeland N.G."/>
            <person name="Gilbert D.J."/>
            <person name="Jenkins N.A."/>
            <person name="Hsu Y.-C."/>
        </authorList>
    </citation>
    <scope>NUCLEOTIDE SEQUENCE [MRNA]</scope>
    <source>
        <strain>CD-1</strain>
        <tissue>Embryo</tissue>
    </source>
</reference>
<reference key="2">
    <citation type="journal article" date="1997" name="Gene">
        <title>Studies of the mouse Rab geranylgeranyl transferase beta subunit: gene structure, expression and regulation.</title>
        <authorList>
            <person name="Chinpaisal C."/>
            <person name="Lee C.-H."/>
            <person name="Wei L.-N."/>
        </authorList>
    </citation>
    <scope>NUCLEOTIDE SEQUENCE [MRNA]</scope>
    <scope>TISSUE SPECIFICITY</scope>
    <scope>DEVELOPMENTAL STAGE</scope>
    <scope>INDUCTION</scope>
    <source>
        <strain>CD-1</strain>
        <tissue>Embryo</tissue>
    </source>
</reference>
<reference key="3">
    <citation type="submission" date="2005-07" db="EMBL/GenBank/DDBJ databases">
        <authorList>
            <person name="Mural R.J."/>
            <person name="Adams M.D."/>
            <person name="Myers E.W."/>
            <person name="Smith H.O."/>
            <person name="Venter J.C."/>
        </authorList>
    </citation>
    <scope>NUCLEOTIDE SEQUENCE [LARGE SCALE GENOMIC DNA]</scope>
</reference>
<reference key="4">
    <citation type="journal article" date="2004" name="Genome Res.">
        <title>The status, quality, and expansion of the NIH full-length cDNA project: the Mammalian Gene Collection (MGC).</title>
        <authorList>
            <consortium name="The MGC Project Team"/>
        </authorList>
    </citation>
    <scope>NUCLEOTIDE SEQUENCE [LARGE SCALE MRNA]</scope>
    <source>
        <tissue>Brain</tissue>
    </source>
</reference>
<reference key="5">
    <citation type="journal article" date="2008" name="Cell. Mol. Biol. Lett.">
        <title>The cytoplasmic domain of chondrolectin interacts with the beta-subunit of Rab geranylgeranyl transferase.</title>
        <authorList>
            <person name="Claessens A."/>
            <person name="Weyn C."/>
            <person name="Merregaert J."/>
        </authorList>
    </citation>
    <scope>INTERACTION WITH CHODL</scope>
</reference>
<reference key="6">
    <citation type="journal article" date="2010" name="Cell">
        <title>A tissue-specific atlas of mouse protein phosphorylation and expression.</title>
        <authorList>
            <person name="Huttlin E.L."/>
            <person name="Jedrychowski M.P."/>
            <person name="Elias J.E."/>
            <person name="Goswami T."/>
            <person name="Rad R."/>
            <person name="Beausoleil S.A."/>
            <person name="Villen J."/>
            <person name="Haas W."/>
            <person name="Sowa M.E."/>
            <person name="Gygi S.P."/>
        </authorList>
    </citation>
    <scope>IDENTIFICATION BY MASS SPECTROMETRY [LARGE SCALE ANALYSIS]</scope>
    <source>
        <tissue>Brain</tissue>
        <tissue>Heart</tissue>
        <tissue>Kidney</tissue>
        <tissue>Liver</tissue>
        <tissue>Lung</tissue>
        <tissue>Pancreas</tissue>
    </source>
</reference>
<reference key="7">
    <citation type="journal article" date="2011" name="Angew. Chem. Int. Ed. Engl.">
        <title>Structure-guided development of selective RabGGTase inhibitors.</title>
        <authorList>
            <person name="Bon R.S."/>
            <person name="Guo Z."/>
            <person name="Stigter E.A."/>
            <person name="Wetzel S."/>
            <person name="Menninger S."/>
            <person name="Wolf A."/>
            <person name="Choidas A."/>
            <person name="Alexandrov K."/>
            <person name="Blankenfeldt W."/>
            <person name="Goody R.S."/>
            <person name="Waldmann H."/>
        </authorList>
    </citation>
    <scope>X-RAY CRYSTALLOGRAPHY (1.95 ANGSTROMS) OF 10-339 IN COMPLEX WITH ZINC AND GERANYLGERANYL DIPHOSPHATE</scope>
    <scope>FUNCTION</scope>
    <scope>CATALYTIC ACTIVITY</scope>
    <scope>COFACTOR</scope>
    <scope>SUBUNIT</scope>
</reference>
<gene>
    <name type="primary">Rabggtb</name>
</gene>
<organism>
    <name type="scientific">Mus musculus</name>
    <name type="common">Mouse</name>
    <dbReference type="NCBI Taxonomy" id="10090"/>
    <lineage>
        <taxon>Eukaryota</taxon>
        <taxon>Metazoa</taxon>
        <taxon>Chordata</taxon>
        <taxon>Craniata</taxon>
        <taxon>Vertebrata</taxon>
        <taxon>Euteleostomi</taxon>
        <taxon>Mammalia</taxon>
        <taxon>Eutheria</taxon>
        <taxon>Euarchontoglires</taxon>
        <taxon>Glires</taxon>
        <taxon>Rodentia</taxon>
        <taxon>Myomorpha</taxon>
        <taxon>Muroidea</taxon>
        <taxon>Muridae</taxon>
        <taxon>Murinae</taxon>
        <taxon>Mus</taxon>
        <taxon>Mus</taxon>
    </lineage>
</organism>
<protein>
    <recommendedName>
        <fullName>Geranylgeranyl transferase type-2 subunit beta</fullName>
        <ecNumber evidence="4">2.5.1.60</ecNumber>
    </recommendedName>
    <alternativeName>
        <fullName>Geranylgeranyl transferase type II subunit beta</fullName>
        <shortName>GGTase-II-beta</shortName>
    </alternativeName>
    <alternativeName>
        <fullName>Rab geranyl-geranyltransferase subunit beta</fullName>
        <shortName>Rab GG transferase beta</shortName>
        <shortName>Rab GGTase beta</shortName>
    </alternativeName>
    <alternativeName>
        <fullName>Rab geranylgeranyltransferase subunit beta</fullName>
    </alternativeName>
    <alternativeName>
        <fullName>Type II protein geranyl-geranyltransferase subunit beta</fullName>
    </alternativeName>
</protein>
<comment type="function">
    <text evidence="4">Catalyzes the transfer of a geranylgeranyl moiety from geranylgeranyl diphosphate to both cysteines of Rab proteins with the C-terminal sequence -XXCC, -XCXC and -CCXX, such as RAB1A, RAB3A, RAB5A and RAB7A.</text>
</comment>
<comment type="catalytic activity">
    <reaction evidence="4">
        <text>geranylgeranyl diphosphate + L-cysteinyl-[protein] = S-geranylgeranyl-L-cysteinyl-[protein] + diphosphate</text>
        <dbReference type="Rhea" id="RHEA:21240"/>
        <dbReference type="Rhea" id="RHEA-COMP:10131"/>
        <dbReference type="Rhea" id="RHEA-COMP:11537"/>
        <dbReference type="ChEBI" id="CHEBI:29950"/>
        <dbReference type="ChEBI" id="CHEBI:33019"/>
        <dbReference type="ChEBI" id="CHEBI:57533"/>
        <dbReference type="ChEBI" id="CHEBI:86021"/>
        <dbReference type="EC" id="2.5.1.60"/>
    </reaction>
</comment>
<comment type="cofactor">
    <cofactor evidence="4">
        <name>Zn(2+)</name>
        <dbReference type="ChEBI" id="CHEBI:29105"/>
    </cofactor>
    <text evidence="4">Binds 1 zinc ion per subunit.</text>
</comment>
<comment type="activity regulation">
    <text evidence="1">The enzymatic reaction requires the aid of a Rab escort protein (also called component A), such as CHM.</text>
</comment>
<comment type="subunit">
    <text evidence="1 2 3 4">Heterotrimer composed of RABGGTA, RABGGTB and CHM; within this trimer, RABGGTA and RABGGTB form the catalytic component B, while CHM (component A) mediates peptide substrate binding (PubMed:21520375). The Rab GGTase dimer (RGGT) interacts with CHM (component A) prior to Rab protein binding; the association is stabilized by geranylgeranyl pyrophosphate (GGpp) (By similarity). The CHM:RGGT:Rab complex is destabilized by GGpp (By similarity). Interaction of RABGGTB with prenylated PTP4A2 precludes its association with RABGGTA and inhibits enzyme activity (By similarity). Interacts with CHODL (PubMed:18161010). Interacts with non-phosphorylated form of RAB8A; phosphorylation of RAB8A at 'Thr-72' disrupts this interaction (By similarity).</text>
</comment>
<comment type="interaction">
    <interactant intactId="EBI-9104297">
        <id>P53612</id>
    </interactant>
    <interactant intactId="EBI-13948582">
        <id>Q9CXM0</id>
        <label>Chodl</label>
    </interactant>
    <organismsDiffer>false</organismsDiffer>
    <experiments>2</experiments>
</comment>
<comment type="tissue specificity">
    <text evidence="5">Ubiquitous. Detected in all the major organs in adult animals.</text>
</comment>
<comment type="developmental stage">
    <text evidence="5">Specific expression was elevated in mid-gestation stages, particularly developing liver and spinal cord.</text>
</comment>
<comment type="induction">
    <text evidence="5">Increased dramatically by cycloheximide (CHX) treatment within a short time (as early as 2 hours). Actinomycin D was used to determine the half-life, CHX treatment resulted in a dramatic increase of the half-life from 8 hours to greater than 12 hours.</text>
</comment>
<comment type="similarity">
    <text evidence="6">Belongs to the protein prenyltransferase subunit beta family.</text>
</comment>
<keyword id="KW-0002">3D-structure</keyword>
<keyword id="KW-0479">Metal-binding</keyword>
<keyword id="KW-0597">Phosphoprotein</keyword>
<keyword id="KW-0637">Prenyltransferase</keyword>
<keyword id="KW-1185">Reference proteome</keyword>
<keyword id="KW-0677">Repeat</keyword>
<keyword id="KW-0808">Transferase</keyword>
<keyword id="KW-0862">Zinc</keyword>